<name>MNTH_ECODH</name>
<protein>
    <recommendedName>
        <fullName evidence="1">Divalent metal cation transporter MntH</fullName>
    </recommendedName>
</protein>
<accession>B1X9R3</accession>
<keyword id="KW-0997">Cell inner membrane</keyword>
<keyword id="KW-1003">Cell membrane</keyword>
<keyword id="KW-0406">Ion transport</keyword>
<keyword id="KW-0472">Membrane</keyword>
<keyword id="KW-0769">Symport</keyword>
<keyword id="KW-0812">Transmembrane</keyword>
<keyword id="KW-1133">Transmembrane helix</keyword>
<keyword id="KW-0813">Transport</keyword>
<organism>
    <name type="scientific">Escherichia coli (strain K12 / DH10B)</name>
    <dbReference type="NCBI Taxonomy" id="316385"/>
    <lineage>
        <taxon>Bacteria</taxon>
        <taxon>Pseudomonadati</taxon>
        <taxon>Pseudomonadota</taxon>
        <taxon>Gammaproteobacteria</taxon>
        <taxon>Enterobacterales</taxon>
        <taxon>Enterobacteriaceae</taxon>
        <taxon>Escherichia</taxon>
    </lineage>
</organism>
<comment type="function">
    <text evidence="1">H(+)-stimulated, divalent metal cation uptake system.</text>
</comment>
<comment type="subcellular location">
    <subcellularLocation>
        <location evidence="1">Cell inner membrane</location>
        <topology evidence="1">Multi-pass membrane protein</topology>
    </subcellularLocation>
</comment>
<comment type="similarity">
    <text evidence="1">Belongs to the NRAMP family.</text>
</comment>
<proteinExistence type="inferred from homology"/>
<evidence type="ECO:0000255" key="1">
    <source>
        <dbReference type="HAMAP-Rule" id="MF_00221"/>
    </source>
</evidence>
<dbReference type="EMBL" id="CP000948">
    <property type="protein sequence ID" value="ACB03548.1"/>
    <property type="molecule type" value="Genomic_DNA"/>
</dbReference>
<dbReference type="RefSeq" id="WP_000186369.1">
    <property type="nucleotide sequence ID" value="NC_010473.1"/>
</dbReference>
<dbReference type="SMR" id="B1X9R3"/>
<dbReference type="KEGG" id="ecd:ECDH10B_2556"/>
<dbReference type="HOGENOM" id="CLU_020088_2_0_6"/>
<dbReference type="GO" id="GO:0005886">
    <property type="term" value="C:plasma membrane"/>
    <property type="evidence" value="ECO:0007669"/>
    <property type="project" value="UniProtKB-SubCell"/>
</dbReference>
<dbReference type="GO" id="GO:0015086">
    <property type="term" value="F:cadmium ion transmembrane transporter activity"/>
    <property type="evidence" value="ECO:0007669"/>
    <property type="project" value="TreeGrafter"/>
</dbReference>
<dbReference type="GO" id="GO:0005384">
    <property type="term" value="F:manganese ion transmembrane transporter activity"/>
    <property type="evidence" value="ECO:0007669"/>
    <property type="project" value="TreeGrafter"/>
</dbReference>
<dbReference type="GO" id="GO:0046872">
    <property type="term" value="F:metal ion binding"/>
    <property type="evidence" value="ECO:0007669"/>
    <property type="project" value="UniProtKB-UniRule"/>
</dbReference>
<dbReference type="GO" id="GO:0015293">
    <property type="term" value="F:symporter activity"/>
    <property type="evidence" value="ECO:0007669"/>
    <property type="project" value="UniProtKB-UniRule"/>
</dbReference>
<dbReference type="GO" id="GO:0034755">
    <property type="term" value="P:iron ion transmembrane transport"/>
    <property type="evidence" value="ECO:0007669"/>
    <property type="project" value="TreeGrafter"/>
</dbReference>
<dbReference type="HAMAP" id="MF_00221">
    <property type="entry name" value="NRAMP"/>
    <property type="match status" value="1"/>
</dbReference>
<dbReference type="InterPro" id="IPR001046">
    <property type="entry name" value="NRAMP_fam"/>
</dbReference>
<dbReference type="NCBIfam" id="TIGR01197">
    <property type="entry name" value="nramp"/>
    <property type="match status" value="1"/>
</dbReference>
<dbReference type="NCBIfam" id="NF037982">
    <property type="entry name" value="Nramp_1"/>
    <property type="match status" value="1"/>
</dbReference>
<dbReference type="NCBIfam" id="NF001923">
    <property type="entry name" value="PRK00701.1"/>
    <property type="match status" value="1"/>
</dbReference>
<dbReference type="PANTHER" id="PTHR11706:SF33">
    <property type="entry name" value="NATURAL RESISTANCE-ASSOCIATED MACROPHAGE PROTEIN 2"/>
    <property type="match status" value="1"/>
</dbReference>
<dbReference type="PANTHER" id="PTHR11706">
    <property type="entry name" value="SOLUTE CARRIER PROTEIN FAMILY 11 MEMBER"/>
    <property type="match status" value="1"/>
</dbReference>
<dbReference type="Pfam" id="PF01566">
    <property type="entry name" value="Nramp"/>
    <property type="match status" value="1"/>
</dbReference>
<dbReference type="PRINTS" id="PR00447">
    <property type="entry name" value="NATRESASSCMP"/>
</dbReference>
<sequence length="412" mass="44194">MTNYRVESSSGRAARKMRLALMGPAFIAAIGYIDPGNFATNIQAGASFGYQLLWVVVWANLMAMLIQILSAKLGIATGKNLAEQIRDHYPRPVVWFYWVQAEIIAMATDLAEFIGAAIGFKLILGVSLLQGAVLTGIATFLILMLQRRGQKPLEKVIGGLLLFVAAAYIVELIFSQPNLAQLGKGMVIPSLPTSEAVFLAAGVLGATIMPHVIYLHSSLTQHLHGGSRQQRYSATKWDVAIAMTIAGFVNLAMMATAAAAFHFSGHTGVADLDEAYLTLQPLLSHAAATVFGLSLVAAGLSSTVVGTLAGQVVMQGFIRFHIPLWVRRTVTMLPSFIVILMGLDPTRILVMSQVLLSFGIALALVPLLIFTSDSKLMGDLVNSKRVKQTGWVIVVLVVALNIWLLVGTALGL</sequence>
<gene>
    <name evidence="1" type="primary">mntH</name>
    <name type="ordered locus">ECDH10B_2556</name>
</gene>
<reference key="1">
    <citation type="journal article" date="2008" name="J. Bacteriol.">
        <title>The complete genome sequence of Escherichia coli DH10B: insights into the biology of a laboratory workhorse.</title>
        <authorList>
            <person name="Durfee T."/>
            <person name="Nelson R."/>
            <person name="Baldwin S."/>
            <person name="Plunkett G. III"/>
            <person name="Burland V."/>
            <person name="Mau B."/>
            <person name="Petrosino J.F."/>
            <person name="Qin X."/>
            <person name="Muzny D.M."/>
            <person name="Ayele M."/>
            <person name="Gibbs R.A."/>
            <person name="Csorgo B."/>
            <person name="Posfai G."/>
            <person name="Weinstock G.M."/>
            <person name="Blattner F.R."/>
        </authorList>
    </citation>
    <scope>NUCLEOTIDE SEQUENCE [LARGE SCALE GENOMIC DNA]</scope>
    <source>
        <strain>K12 / DH10B</strain>
    </source>
</reference>
<feature type="chain" id="PRO_1000100083" description="Divalent metal cation transporter MntH">
    <location>
        <begin position="1"/>
        <end position="412"/>
    </location>
</feature>
<feature type="topological domain" description="Cytoplasmic" evidence="1">
    <location>
        <begin position="1"/>
        <end position="19"/>
    </location>
</feature>
<feature type="transmembrane region" description="Helical" evidence="1">
    <location>
        <begin position="20"/>
        <end position="39"/>
    </location>
</feature>
<feature type="topological domain" description="Periplasmic" evidence="1">
    <location>
        <begin position="40"/>
        <end position="51"/>
    </location>
</feature>
<feature type="transmembrane region" description="Helical" evidence="1">
    <location>
        <begin position="52"/>
        <end position="71"/>
    </location>
</feature>
<feature type="topological domain" description="Cytoplasmic" evidence="1">
    <location>
        <begin position="72"/>
        <end position="95"/>
    </location>
</feature>
<feature type="transmembrane region" description="Helical" evidence="1">
    <location>
        <begin position="96"/>
        <end position="118"/>
    </location>
</feature>
<feature type="topological domain" description="Periplasmic" evidence="1">
    <location>
        <begin position="119"/>
        <end position="125"/>
    </location>
</feature>
<feature type="transmembrane region" description="Helical" evidence="1">
    <location>
        <begin position="126"/>
        <end position="145"/>
    </location>
</feature>
<feature type="topological domain" description="Cytoplasmic" evidence="1">
    <location>
        <begin position="146"/>
        <end position="155"/>
    </location>
</feature>
<feature type="transmembrane region" description="Helical" evidence="1">
    <location>
        <begin position="156"/>
        <end position="175"/>
    </location>
</feature>
<feature type="topological domain" description="Periplasmic" evidence="1">
    <location>
        <begin position="176"/>
        <end position="196"/>
    </location>
</feature>
<feature type="transmembrane region" description="Helical" evidence="1">
    <location>
        <begin position="197"/>
        <end position="220"/>
    </location>
</feature>
<feature type="topological domain" description="Cytoplasmic" evidence="1">
    <location>
        <begin position="221"/>
        <end position="238"/>
    </location>
</feature>
<feature type="transmembrane region" description="Helical" evidence="1">
    <location>
        <begin position="239"/>
        <end position="258"/>
    </location>
</feature>
<feature type="topological domain" description="Periplasmic" evidence="1">
    <location>
        <begin position="259"/>
        <end position="276"/>
    </location>
</feature>
<feature type="transmembrane region" description="Helical" evidence="1">
    <location>
        <begin position="277"/>
        <end position="297"/>
    </location>
</feature>
<feature type="topological domain" description="Cytoplasmic" evidence="1">
    <location>
        <begin position="298"/>
        <end position="327"/>
    </location>
</feature>
<feature type="transmembrane region" description="Helical" evidence="1">
    <location>
        <begin position="328"/>
        <end position="344"/>
    </location>
</feature>
<feature type="topological domain" description="Periplasmic" evidence="1">
    <location>
        <begin position="345"/>
        <end position="350"/>
    </location>
</feature>
<feature type="transmembrane region" description="Helical" evidence="1">
    <location>
        <begin position="351"/>
        <end position="370"/>
    </location>
</feature>
<feature type="topological domain" description="Cytoplasmic" evidence="1">
    <location>
        <begin position="371"/>
        <end position="387"/>
    </location>
</feature>
<feature type="transmembrane region" description="Helical" evidence="1">
    <location>
        <begin position="388"/>
        <end position="406"/>
    </location>
</feature>
<feature type="topological domain" description="Periplasmic" evidence="1">
    <location>
        <begin position="407"/>
        <end position="412"/>
    </location>
</feature>